<sequence length="859" mass="97990">MRRWFKKTLPRPPDEEESAGLTNKDIVETNHLYPTITNLSLNSDTSSILFDKNKKPLKPKIIIPDKEFDLDYYLKDETESIQSPFEGFTAQPNFSNFNKQGNTMNREANFQRTNEKIQRNKSIKRVKLFHGNLILDCPIPKKLLVTLPQQTEREFAYMRYSAATCDPQDFSKSLFTLRQPLFFQPRKTEICIAITMYNEDEVLFARTMHSVMKNISHLCTRKNSQVWGKDAWKKVVVCIISDGRTKIHPRTLAYLAAIGVYQDGIAKNQVNDKEVKAHIYEYTTQLSIDPNLKFKGSDRGIVPVQMIFCLKEKNQKKLNSHLWFFQAFCPILKPEVCILLDAGTRPGDQSIYHLWKSFDLNPQVAGACGEIVVMKGKLGSGLINPLVATQNFEYKMSNILDKPVESVFGFISVLPGAFSAYRFEALQNDSQGNGPLASYFKGELQNTGKSGIFEANMYLAEDRILCFELVSKKNEAWILHYVKSAYADTDVPDRIPEFVLQRRRWLNGSFFAAAYAICHYYRFFRTSHTISRKFMLSIEFIYQLATIVFGWFNIGNFFIIFYILTSSLASTSANFLPGEILFRIAIWIYASLLVTCFVLALGNRPHGSPNFYLSMVIMYSILMGYLLFCSGWIAYRAISDAIHNASSTSSSYTSALLNSNVFINIVISLSSTYGMYLVVSIISFDPWHMFTSFVQYIFLSIMYTNVLNVYAFCNTHDVSWGTKGDHFTNNDLGVARLLQKGADVEIAIPTNQSDIDAKYEDAVKLLASPSLEFNSPIINHGEQEDFYKNFRTYVVLTWILSNLFLVGIVLSIPKINGISISNNETSAYLSFLLWSVVAFSVFRFIGCIFYLFIRLCTGE</sequence>
<protein>
    <recommendedName>
        <fullName>Chitin synthase 1</fullName>
        <ecNumber>2.4.1.16</ecNumber>
    </recommendedName>
    <alternativeName>
        <fullName>Chitin-UDP acetyl-glucosaminyl transferase 1</fullName>
    </alternativeName>
</protein>
<keyword id="KW-1003">Cell membrane</keyword>
<keyword id="KW-0961">Cell wall biogenesis/degradation</keyword>
<keyword id="KW-0328">Glycosyltransferase</keyword>
<keyword id="KW-0472">Membrane</keyword>
<keyword id="KW-1185">Reference proteome</keyword>
<keyword id="KW-0808">Transferase</keyword>
<keyword id="KW-0812">Transmembrane</keyword>
<keyword id="KW-1133">Transmembrane helix</keyword>
<gene>
    <name type="primary">chs1</name>
    <name type="ORF">SPAC13G6.12c</name>
    <name type="ORF">SPAC24B11.01c</name>
</gene>
<reference key="1">
    <citation type="journal article" date="2002" name="Nature">
        <title>The genome sequence of Schizosaccharomyces pombe.</title>
        <authorList>
            <person name="Wood V."/>
            <person name="Gwilliam R."/>
            <person name="Rajandream M.A."/>
            <person name="Lyne M.H."/>
            <person name="Lyne R."/>
            <person name="Stewart A."/>
            <person name="Sgouros J.G."/>
            <person name="Peat N."/>
            <person name="Hayles J."/>
            <person name="Baker S.G."/>
            <person name="Basham D."/>
            <person name="Bowman S."/>
            <person name="Brooks K."/>
            <person name="Brown D."/>
            <person name="Brown S."/>
            <person name="Chillingworth T."/>
            <person name="Churcher C.M."/>
            <person name="Collins M."/>
            <person name="Connor R."/>
            <person name="Cronin A."/>
            <person name="Davis P."/>
            <person name="Feltwell T."/>
            <person name="Fraser A."/>
            <person name="Gentles S."/>
            <person name="Goble A."/>
            <person name="Hamlin N."/>
            <person name="Harris D.E."/>
            <person name="Hidalgo J."/>
            <person name="Hodgson G."/>
            <person name="Holroyd S."/>
            <person name="Hornsby T."/>
            <person name="Howarth S."/>
            <person name="Huckle E.J."/>
            <person name="Hunt S."/>
            <person name="Jagels K."/>
            <person name="James K.D."/>
            <person name="Jones L."/>
            <person name="Jones M."/>
            <person name="Leather S."/>
            <person name="McDonald S."/>
            <person name="McLean J."/>
            <person name="Mooney P."/>
            <person name="Moule S."/>
            <person name="Mungall K.L."/>
            <person name="Murphy L.D."/>
            <person name="Niblett D."/>
            <person name="Odell C."/>
            <person name="Oliver K."/>
            <person name="O'Neil S."/>
            <person name="Pearson D."/>
            <person name="Quail M.A."/>
            <person name="Rabbinowitsch E."/>
            <person name="Rutherford K.M."/>
            <person name="Rutter S."/>
            <person name="Saunders D."/>
            <person name="Seeger K."/>
            <person name="Sharp S."/>
            <person name="Skelton J."/>
            <person name="Simmonds M.N."/>
            <person name="Squares R."/>
            <person name="Squares S."/>
            <person name="Stevens K."/>
            <person name="Taylor K."/>
            <person name="Taylor R.G."/>
            <person name="Tivey A."/>
            <person name="Walsh S.V."/>
            <person name="Warren T."/>
            <person name="Whitehead S."/>
            <person name="Woodward J.R."/>
            <person name="Volckaert G."/>
            <person name="Aert R."/>
            <person name="Robben J."/>
            <person name="Grymonprez B."/>
            <person name="Weltjens I."/>
            <person name="Vanstreels E."/>
            <person name="Rieger M."/>
            <person name="Schaefer M."/>
            <person name="Mueller-Auer S."/>
            <person name="Gabel C."/>
            <person name="Fuchs M."/>
            <person name="Duesterhoeft A."/>
            <person name="Fritzc C."/>
            <person name="Holzer E."/>
            <person name="Moestl D."/>
            <person name="Hilbert H."/>
            <person name="Borzym K."/>
            <person name="Langer I."/>
            <person name="Beck A."/>
            <person name="Lehrach H."/>
            <person name="Reinhardt R."/>
            <person name="Pohl T.M."/>
            <person name="Eger P."/>
            <person name="Zimmermann W."/>
            <person name="Wedler H."/>
            <person name="Wambutt R."/>
            <person name="Purnelle B."/>
            <person name="Goffeau A."/>
            <person name="Cadieu E."/>
            <person name="Dreano S."/>
            <person name="Gloux S."/>
            <person name="Lelaure V."/>
            <person name="Mottier S."/>
            <person name="Galibert F."/>
            <person name="Aves S.J."/>
            <person name="Xiang Z."/>
            <person name="Hunt C."/>
            <person name="Moore K."/>
            <person name="Hurst S.M."/>
            <person name="Lucas M."/>
            <person name="Rochet M."/>
            <person name="Gaillardin C."/>
            <person name="Tallada V.A."/>
            <person name="Garzon A."/>
            <person name="Thode G."/>
            <person name="Daga R.R."/>
            <person name="Cruzado L."/>
            <person name="Jimenez J."/>
            <person name="Sanchez M."/>
            <person name="del Rey F."/>
            <person name="Benito J."/>
            <person name="Dominguez A."/>
            <person name="Revuelta J.L."/>
            <person name="Moreno S."/>
            <person name="Armstrong J."/>
            <person name="Forsburg S.L."/>
            <person name="Cerutti L."/>
            <person name="Lowe T."/>
            <person name="McCombie W.R."/>
            <person name="Paulsen I."/>
            <person name="Potashkin J."/>
            <person name="Shpakovski G.V."/>
            <person name="Ussery D."/>
            <person name="Barrell B.G."/>
            <person name="Nurse P."/>
        </authorList>
    </citation>
    <scope>NUCLEOTIDE SEQUENCE [LARGE SCALE GENOMIC DNA]</scope>
    <source>
        <strain>972 / ATCC 24843</strain>
    </source>
</reference>
<reference key="2">
    <citation type="journal article" date="1992" name="Proc. Natl. Acad. Sci. U.S.A.">
        <title>Classification of fungal chitin synthases.</title>
        <authorList>
            <person name="Bowen A.R."/>
            <person name="Chen-Wu J.L.-P."/>
            <person name="Momany M."/>
            <person name="Young R."/>
            <person name="Szaniszlo P.J."/>
            <person name="Robbins P.W."/>
        </authorList>
    </citation>
    <scope>NUCLEOTIDE SEQUENCE [GENOMIC DNA] OF 201-389</scope>
</reference>
<name>CHS1_SCHPO</name>
<organism>
    <name type="scientific">Schizosaccharomyces pombe (strain 972 / ATCC 24843)</name>
    <name type="common">Fission yeast</name>
    <dbReference type="NCBI Taxonomy" id="284812"/>
    <lineage>
        <taxon>Eukaryota</taxon>
        <taxon>Fungi</taxon>
        <taxon>Dikarya</taxon>
        <taxon>Ascomycota</taxon>
        <taxon>Taphrinomycotina</taxon>
        <taxon>Schizosaccharomycetes</taxon>
        <taxon>Schizosaccharomycetales</taxon>
        <taxon>Schizosaccharomycetaceae</taxon>
        <taxon>Schizosaccharomyces</taxon>
    </lineage>
</organism>
<proteinExistence type="inferred from homology"/>
<comment type="function">
    <text evidence="3">Polymerizes chitin, a structural polymer of the cell wall and septum, by transferring the sugar moiety of UDP-GlcNAc to the non-reducing end of the growing chitin polymer.</text>
</comment>
<comment type="catalytic activity">
    <reaction>
        <text>[(1-&gt;4)-N-acetyl-beta-D-glucosaminyl](n) + UDP-N-acetyl-alpha-D-glucosamine = [(1-&gt;4)-N-acetyl-beta-D-glucosaminyl](n+1) + UDP + H(+)</text>
        <dbReference type="Rhea" id="RHEA:16637"/>
        <dbReference type="Rhea" id="RHEA-COMP:9593"/>
        <dbReference type="Rhea" id="RHEA-COMP:9595"/>
        <dbReference type="ChEBI" id="CHEBI:15378"/>
        <dbReference type="ChEBI" id="CHEBI:17029"/>
        <dbReference type="ChEBI" id="CHEBI:57705"/>
        <dbReference type="ChEBI" id="CHEBI:58223"/>
        <dbReference type="EC" id="2.4.1.16"/>
    </reaction>
</comment>
<comment type="subcellular location">
    <subcellularLocation>
        <location evidence="3">Cell membrane</location>
        <topology evidence="1">Multi-pass membrane protein</topology>
    </subcellularLocation>
</comment>
<comment type="similarity">
    <text evidence="3">Belongs to the chitin synthase family.</text>
</comment>
<evidence type="ECO:0000255" key="1"/>
<evidence type="ECO:0000256" key="2">
    <source>
        <dbReference type="SAM" id="MobiDB-lite"/>
    </source>
</evidence>
<evidence type="ECO:0000305" key="3"/>
<accession>P30597</accession>
<feature type="chain" id="PRO_0000193716" description="Chitin synthase 1">
    <location>
        <begin position="1"/>
        <end position="859"/>
    </location>
</feature>
<feature type="transmembrane region" description="Helical" evidence="1">
    <location>
        <begin position="544"/>
        <end position="564"/>
    </location>
</feature>
<feature type="transmembrane region" description="Helical" evidence="1">
    <location>
        <begin position="615"/>
        <end position="635"/>
    </location>
</feature>
<feature type="transmembrane region" description="Helical" evidence="1">
    <location>
        <begin position="662"/>
        <end position="682"/>
    </location>
</feature>
<feature type="transmembrane region" description="Helical" evidence="1">
    <location>
        <begin position="793"/>
        <end position="813"/>
    </location>
</feature>
<feature type="transmembrane region" description="Helical" evidence="1">
    <location>
        <begin position="833"/>
        <end position="853"/>
    </location>
</feature>
<feature type="region of interest" description="Disordered" evidence="2">
    <location>
        <begin position="1"/>
        <end position="22"/>
    </location>
</feature>
<feature type="sequence conflict" description="In Ref. 2; AAA35297." evidence="3" ref="2">
    <original>K</original>
    <variation>R</variation>
    <location>
        <position position="273"/>
    </location>
</feature>
<dbReference type="EC" id="2.4.1.16"/>
<dbReference type="EMBL" id="CU329670">
    <property type="protein sequence ID" value="CAA91105.1"/>
    <property type="molecule type" value="Genomic_DNA"/>
</dbReference>
<dbReference type="EMBL" id="M82957">
    <property type="protein sequence ID" value="AAA35297.1"/>
    <property type="molecule type" value="Genomic_DNA"/>
</dbReference>
<dbReference type="PIR" id="S62441">
    <property type="entry name" value="S62441"/>
</dbReference>
<dbReference type="RefSeq" id="NP_592838.1">
    <property type="nucleotide sequence ID" value="NM_001018239.2"/>
</dbReference>
<dbReference type="SMR" id="P30597"/>
<dbReference type="BioGRID" id="279304">
    <property type="interactions" value="3"/>
</dbReference>
<dbReference type="FunCoup" id="P30597">
    <property type="interactions" value="44"/>
</dbReference>
<dbReference type="STRING" id="284812.P30597"/>
<dbReference type="CAZy" id="GT2">
    <property type="family name" value="Glycosyltransferase Family 2"/>
</dbReference>
<dbReference type="PaxDb" id="4896-SPAC13G6.12c.1"/>
<dbReference type="EnsemblFungi" id="SPAC13G6.12c.1">
    <property type="protein sequence ID" value="SPAC13G6.12c.1:pep"/>
    <property type="gene ID" value="SPAC13G6.12c"/>
</dbReference>
<dbReference type="GeneID" id="2542858"/>
<dbReference type="KEGG" id="spo:2542858"/>
<dbReference type="PomBase" id="SPAC13G6.12c">
    <property type="gene designation" value="chs1"/>
</dbReference>
<dbReference type="VEuPathDB" id="FungiDB:SPAC13G6.12c"/>
<dbReference type="eggNOG" id="KOG2571">
    <property type="taxonomic scope" value="Eukaryota"/>
</dbReference>
<dbReference type="HOGENOM" id="CLU_004760_3_1_1"/>
<dbReference type="InParanoid" id="P30597"/>
<dbReference type="OMA" id="AWILHYV"/>
<dbReference type="PhylomeDB" id="P30597"/>
<dbReference type="PRO" id="PR:P30597"/>
<dbReference type="Proteomes" id="UP000002485">
    <property type="component" value="Chromosome I"/>
</dbReference>
<dbReference type="GO" id="GO:0071944">
    <property type="term" value="C:cell periphery"/>
    <property type="evidence" value="ECO:0000318"/>
    <property type="project" value="GO_Central"/>
</dbReference>
<dbReference type="GO" id="GO:0030428">
    <property type="term" value="C:cell septum"/>
    <property type="evidence" value="ECO:0000318"/>
    <property type="project" value="GO_Central"/>
</dbReference>
<dbReference type="GO" id="GO:0005886">
    <property type="term" value="C:plasma membrane"/>
    <property type="evidence" value="ECO:0007669"/>
    <property type="project" value="UniProtKB-SubCell"/>
</dbReference>
<dbReference type="GO" id="GO:0004100">
    <property type="term" value="F:chitin synthase activity"/>
    <property type="evidence" value="ECO:0000315"/>
    <property type="project" value="PomBase"/>
</dbReference>
<dbReference type="GO" id="GO:0030476">
    <property type="term" value="P:ascospore wall assembly"/>
    <property type="evidence" value="ECO:0000315"/>
    <property type="project" value="PomBase"/>
</dbReference>
<dbReference type="GO" id="GO:0006031">
    <property type="term" value="P:chitin biosynthetic process"/>
    <property type="evidence" value="ECO:0000315"/>
    <property type="project" value="PomBase"/>
</dbReference>
<dbReference type="CDD" id="cd04190">
    <property type="entry name" value="Chitin_synth_C"/>
    <property type="match status" value="1"/>
</dbReference>
<dbReference type="InterPro" id="IPR004835">
    <property type="entry name" value="Chitin_synth"/>
</dbReference>
<dbReference type="InterPro" id="IPR004834">
    <property type="entry name" value="Chitin_synth_fun"/>
</dbReference>
<dbReference type="InterPro" id="IPR013616">
    <property type="entry name" value="Chitin_synth_N"/>
</dbReference>
<dbReference type="InterPro" id="IPR029044">
    <property type="entry name" value="Nucleotide-diphossugar_trans"/>
</dbReference>
<dbReference type="PANTHER" id="PTHR22914">
    <property type="entry name" value="CHITIN SYNTHASE"/>
    <property type="match status" value="1"/>
</dbReference>
<dbReference type="PANTHER" id="PTHR22914:SF9">
    <property type="entry name" value="CHITIN SYNTHASE 1"/>
    <property type="match status" value="1"/>
</dbReference>
<dbReference type="Pfam" id="PF01644">
    <property type="entry name" value="Chitin_synth_1"/>
    <property type="match status" value="1"/>
</dbReference>
<dbReference type="Pfam" id="PF08407">
    <property type="entry name" value="Chitin_synth_1N"/>
    <property type="match status" value="1"/>
</dbReference>
<dbReference type="SUPFAM" id="SSF53448">
    <property type="entry name" value="Nucleotide-diphospho-sugar transferases"/>
    <property type="match status" value="1"/>
</dbReference>